<feature type="chain" id="PRO_0000083034" description="Methionyl-tRNA formyltransferase">
    <location>
        <begin position="1" status="less than"/>
        <end position="73"/>
    </location>
</feature>
<feature type="non-terminal residue">
    <location>
        <position position="1"/>
    </location>
</feature>
<protein>
    <recommendedName>
        <fullName evidence="1">Methionyl-tRNA formyltransferase</fullName>
        <ecNumber evidence="1">2.1.2.9</ecNumber>
    </recommendedName>
</protein>
<accession>O33545</accession>
<reference key="1">
    <citation type="submission" date="1997-05" db="EMBL/GenBank/DDBJ databases">
        <title>Rearrangement of the rRNA genes in Rickettsia preceeded the divergence of the typhus and the spotted fever group Rickettsia.</title>
        <authorList>
            <person name="Andersson S.G.E."/>
            <person name="Stothard D.R."/>
            <person name="Romedenne M."/>
            <person name="Viseur N."/>
            <person name="Fuerst P."/>
            <person name="Kurland C.G."/>
        </authorList>
    </citation>
    <scope>NUCLEOTIDE SEQUENCE [GENOMIC DNA]</scope>
</reference>
<proteinExistence type="inferred from homology"/>
<keyword id="KW-0648">Protein biosynthesis</keyword>
<keyword id="KW-0808">Transferase</keyword>
<organism>
    <name type="scientific">Rickettsia rhipicephali</name>
    <dbReference type="NCBI Taxonomy" id="33992"/>
    <lineage>
        <taxon>Bacteria</taxon>
        <taxon>Pseudomonadati</taxon>
        <taxon>Pseudomonadota</taxon>
        <taxon>Alphaproteobacteria</taxon>
        <taxon>Rickettsiales</taxon>
        <taxon>Rickettsiaceae</taxon>
        <taxon>Rickettsieae</taxon>
        <taxon>Rickettsia</taxon>
        <taxon>spotted fever group</taxon>
    </lineage>
</organism>
<evidence type="ECO:0000250" key="1">
    <source>
        <dbReference type="UniProtKB" id="P23882"/>
    </source>
</evidence>
<evidence type="ECO:0000305" key="2"/>
<name>FMT_RICRH</name>
<comment type="function">
    <text evidence="1">Attaches a formyl group to the free amino group of methionyl-tRNA(fMet). The formyl group appears to play a dual role in the initiator identity of N-formylmethionyl-tRNA by promoting its recognition by IF2 and preventing the misappropriation of this tRNA by the elongation apparatus.</text>
</comment>
<comment type="catalytic activity">
    <reaction evidence="1">
        <text>L-methionyl-tRNA(fMet) + (6R)-10-formyltetrahydrofolate = N-formyl-L-methionyl-tRNA(fMet) + (6S)-5,6,7,8-tetrahydrofolate + H(+)</text>
        <dbReference type="Rhea" id="RHEA:24380"/>
        <dbReference type="Rhea" id="RHEA-COMP:9952"/>
        <dbReference type="Rhea" id="RHEA-COMP:9953"/>
        <dbReference type="ChEBI" id="CHEBI:15378"/>
        <dbReference type="ChEBI" id="CHEBI:57453"/>
        <dbReference type="ChEBI" id="CHEBI:78530"/>
        <dbReference type="ChEBI" id="CHEBI:78844"/>
        <dbReference type="ChEBI" id="CHEBI:195366"/>
        <dbReference type="EC" id="2.1.2.9"/>
    </reaction>
</comment>
<comment type="similarity">
    <text evidence="2">Belongs to the Fmt family.</text>
</comment>
<sequence>YFSYNDKIIKILEAEYLNADHHFTSGTVISDKLEIACGSGILRVKKLQQESKKALNIEEFLCGTNILKDTVLK</sequence>
<dbReference type="EC" id="2.1.2.9" evidence="1"/>
<dbReference type="EMBL" id="Y13128">
    <property type="protein sequence ID" value="CAA73595.1"/>
    <property type="molecule type" value="Genomic_DNA"/>
</dbReference>
<dbReference type="SMR" id="O33545"/>
<dbReference type="GO" id="GO:0004479">
    <property type="term" value="F:methionyl-tRNA formyltransferase activity"/>
    <property type="evidence" value="ECO:0007669"/>
    <property type="project" value="UniProtKB-EC"/>
</dbReference>
<dbReference type="CDD" id="cd08704">
    <property type="entry name" value="Met_tRNA_FMT_C"/>
    <property type="match status" value="1"/>
</dbReference>
<dbReference type="Gene3D" id="3.10.25.10">
    <property type="entry name" value="Formyl transferase, C-terminal domain"/>
    <property type="match status" value="1"/>
</dbReference>
<dbReference type="InterPro" id="IPR005793">
    <property type="entry name" value="Formyl_trans_C"/>
</dbReference>
<dbReference type="InterPro" id="IPR037022">
    <property type="entry name" value="Formyl_trans_C_sf"/>
</dbReference>
<dbReference type="InterPro" id="IPR011034">
    <property type="entry name" value="Formyl_transferase-like_C_sf"/>
</dbReference>
<dbReference type="InterPro" id="IPR044135">
    <property type="entry name" value="Met-tRNA-FMT_C"/>
</dbReference>
<dbReference type="Pfam" id="PF02911">
    <property type="entry name" value="Formyl_trans_C"/>
    <property type="match status" value="1"/>
</dbReference>
<dbReference type="SUPFAM" id="SSF50486">
    <property type="entry name" value="FMT C-terminal domain-like"/>
    <property type="match status" value="1"/>
</dbReference>
<gene>
    <name type="primary">fmt</name>
</gene>